<proteinExistence type="evidence at protein level"/>
<sequence length="715" mass="77188">MRAPSARALLLIPRRGPAVRAWAPAVSSRIWLASEWTPLVRAWTSLIHKPGSGLRFPAPLSGLPGGVGQWATSSGARRCWVLAGPRAAHPLFARLQGAAATGVRDLGNDSQRRPAATGRSEVWKLLGLVRPERGRLSAAVGFLAVSSVITMSAPFFLGRIIDVIYTNPSEGYGDSLTRLCAVLTCVFLCGAAANGIRVYLMQSSGQSIVNRLRTSLFSSILRQEVAFFDKTRTGELINRLSSDTALLGRSVTENLSDGLRAGAQASVGVGMMFFVSPSLATFVLSVVPPISVLAVIYGRYLRKLSKATQDSLAEATQLAEERIGNIRTIRAFGKEMTEVEKYTGRVDQLLQLAQKEALARAGFFGAAGLSGNLIVLSVLYKGGLLMGSAHMTVGELSSFLMYAFWVGLSIGGLSSFYSELMKGLGAGGRLWELLERQPRLPFNEGMVLDEKTFQGALEFRNVHFTYPARPEVSVFQDFSLSIPSGSVTALVGPSGSGKSTVVSLLLRLYDPNSGTVSLDGHDIRQLNPVWLRSKIGTVSQEPVLFSCSVAENIAYGADNLSSVTAQQVERAAEVANAAEFIRSFPQGFDTVVGEKGILLSGGQKQRIAIARALLKNPKILLLDEATSALDAENEHLVQEALDRLMEGRTVLIIAHRLSTIKNANFVAVLDHGKICEHGTHEELLLKPNGLYRKLMNKQSFLSYNGAEQFLEPARA</sequence>
<feature type="transit peptide" description="Mitochondrion" evidence="5">
    <location>
        <begin position="1"/>
        <end position="82"/>
    </location>
</feature>
<feature type="chain" id="PRO_0000000256" description="ATP-binding cassette sub-family B member 10, mitochondrial">
    <location>
        <begin position="83"/>
        <end position="715"/>
    </location>
</feature>
<feature type="topological domain" description="Mitochondrial matrix" evidence="15">
    <location>
        <begin position="83"/>
        <end position="133"/>
    </location>
</feature>
<feature type="transmembrane region" description="Helical" evidence="1">
    <location>
        <begin position="134"/>
        <end position="157"/>
    </location>
</feature>
<feature type="topological domain" description="Mitochondrial intermembrane" evidence="15">
    <location>
        <begin position="158"/>
        <end position="178"/>
    </location>
</feature>
<feature type="transmembrane region" description="Helical" evidence="1">
    <location>
        <begin position="179"/>
        <end position="201"/>
    </location>
</feature>
<feature type="topological domain" description="Mitochondrial matrix" evidence="15">
    <location>
        <begin position="202"/>
        <end position="252"/>
    </location>
</feature>
<feature type="transmembrane region" description="Helical" evidence="1">
    <location>
        <begin position="253"/>
        <end position="275"/>
    </location>
</feature>
<feature type="topological domain" description="Mitochondrial intermembrane" evidence="15">
    <location>
        <begin position="276"/>
        <end position="278"/>
    </location>
</feature>
<feature type="transmembrane region" description="Helical" evidence="1">
    <location>
        <begin position="279"/>
        <end position="298"/>
    </location>
</feature>
<feature type="topological domain" description="Mitochondrial matrix" evidence="15">
    <location>
        <begin position="299"/>
        <end position="357"/>
    </location>
</feature>
<feature type="transmembrane region" description="Helical" evidence="1">
    <location>
        <begin position="358"/>
        <end position="381"/>
    </location>
</feature>
<feature type="topological domain" description="Mitochondrial intermembrane" evidence="15">
    <location>
        <begin position="382"/>
        <end position="395"/>
    </location>
</feature>
<feature type="transmembrane region" description="Helical" evidence="1">
    <location>
        <begin position="396"/>
        <end position="417"/>
    </location>
</feature>
<feature type="topological domain" description="Mitochondrial matrix" evidence="15">
    <location>
        <begin position="418"/>
        <end position="715"/>
    </location>
</feature>
<feature type="domain" description="ABC transmembrane type-1" evidence="3">
    <location>
        <begin position="136"/>
        <end position="422"/>
    </location>
</feature>
<feature type="domain" description="ABC transporter" evidence="2">
    <location>
        <begin position="457"/>
        <end position="696"/>
    </location>
</feature>
<feature type="binding site" evidence="1">
    <location>
        <position position="495"/>
    </location>
    <ligand>
        <name>ATP</name>
        <dbReference type="ChEBI" id="CHEBI:30616"/>
    </ligand>
</feature>
<feature type="binding site" evidence="1">
    <location>
        <position position="497"/>
    </location>
    <ligand>
        <name>ATP</name>
        <dbReference type="ChEBI" id="CHEBI:30616"/>
    </ligand>
</feature>
<feature type="binding site" evidence="1">
    <location>
        <position position="498"/>
    </location>
    <ligand>
        <name>ATP</name>
        <dbReference type="ChEBI" id="CHEBI:30616"/>
    </ligand>
</feature>
<feature type="binding site" evidence="1">
    <location>
        <position position="499"/>
    </location>
    <ligand>
        <name>ATP</name>
        <dbReference type="ChEBI" id="CHEBI:30616"/>
    </ligand>
</feature>
<feature type="binding site" evidence="1">
    <location>
        <position position="499"/>
    </location>
    <ligand>
        <name>Mg(2+)</name>
        <dbReference type="ChEBI" id="CHEBI:18420"/>
    </ligand>
</feature>
<feature type="binding site" evidence="1">
    <location>
        <position position="500"/>
    </location>
    <ligand>
        <name>ATP</name>
        <dbReference type="ChEBI" id="CHEBI:30616"/>
    </ligand>
</feature>
<feature type="binding site" evidence="1">
    <location>
        <position position="623"/>
    </location>
    <ligand>
        <name>Mg(2+)</name>
        <dbReference type="ChEBI" id="CHEBI:18420"/>
    </ligand>
</feature>
<feature type="modified residue" description="N6-acetyllysine" evidence="1">
    <location>
        <position position="230"/>
    </location>
</feature>
<feature type="modified residue" description="S-glutathionyl cysteine" evidence="10">
    <location>
        <position position="547"/>
    </location>
</feature>
<feature type="mutagenesis site" description="Decreases ATP binding about 50%." evidence="10">
    <original>G</original>
    <variation>A</variation>
    <location>
        <position position="497"/>
    </location>
</feature>
<feature type="mutagenesis site" description="Decreases ATP binding about 50%." evidence="10">
    <original>K</original>
    <variation>R</variation>
    <location>
        <position position="498"/>
    </location>
</feature>
<feature type="mutagenesis site" description="Does not affect ABCB10 glutathionylation." evidence="10">
    <original>C</original>
    <variation>A</variation>
    <location>
        <position position="547"/>
    </location>
</feature>
<feature type="mutagenesis site" description="Affects ATP hydrolysis but not binding." evidence="10">
    <original>G</original>
    <variation>D</variation>
    <location>
        <position position="602"/>
    </location>
</feature>
<feature type="mutagenesis site" description="Affects ATP hydrolysis but not binding." evidence="10">
    <original>G</original>
    <variation>V</variation>
    <location>
        <position position="602"/>
    </location>
</feature>
<feature type="mutagenesis site" description="Affects ATP hydrolysis but not binding." evidence="10">
    <original>E</original>
    <variation>Q</variation>
    <location>
        <position position="624"/>
    </location>
</feature>
<feature type="mutagenesis site" description="Prevents ABCB10 glutathionylation." evidence="10">
    <original>C</original>
    <variation>A</variation>
    <location>
        <position position="675"/>
    </location>
</feature>
<comment type="function">
    <text evidence="1 6 8 9 10 11 13">ATP-dependent transporter located in the mitochondrial inner membrane that catalyzes the export of biliverdin from the mitochondrial matrix, and plays a crucial role in hemoglobin synthesis and antioxidative stress (PubMed:22240895, PubMed:24421385, PubMed:26053025, PubMed:28808058, PubMed:34011630). Participates in the early step of the heme biosynthetic process during insertion of iron into protoporphyrin IX (PPIX) (PubMed:24421385, PubMed:28808058). Involved in the stabilization of the iron transporter mitoferrin-1/SLC25A37 (PubMed:19805291). In addition may be involved in mitochondrial unfolded protein response (UPRmt) signaling pathway, although ABCB10 probably does not participate in peptide export from mitochondria (By similarity).</text>
</comment>
<comment type="catalytic activity">
    <reaction evidence="1">
        <text>biliverdin IXalpha(in) + ATP + H2O = biliverdin IXalpha(out) + ADP + phosphate + H(+)</text>
        <dbReference type="Rhea" id="RHEA:82359"/>
        <dbReference type="ChEBI" id="CHEBI:15377"/>
        <dbReference type="ChEBI" id="CHEBI:15378"/>
        <dbReference type="ChEBI" id="CHEBI:30616"/>
        <dbReference type="ChEBI" id="CHEBI:43474"/>
        <dbReference type="ChEBI" id="CHEBI:57991"/>
        <dbReference type="ChEBI" id="CHEBI:456216"/>
    </reaction>
    <physiologicalReaction direction="left-to-right" evidence="1">
        <dbReference type="Rhea" id="RHEA:82360"/>
    </physiologicalReaction>
</comment>
<comment type="activity regulation">
    <text evidence="10">Oxidized glutathione (GSSG) stimulates ATP hydrolysis without affecting ATP binding, whereas reduced glutathione (GSH) inhibits ATP binding and hydrolysis.</text>
</comment>
<comment type="subunit">
    <text evidence="1 5 6 7 12">Homodimer or homooligomer (PubMed:15215243, PubMed:30765471). Interacts with PAAT; this interaction regulates ABCB10 (By similarity). Interacts with SLC25A37; this interaction stabilizes SLC25A37 and enhances the function of SLC25A37 to import mitochondrial iron during erythroid differentiation (PubMed:19805291). Interacts with FECH; this interaction may allow the formation of the oligomeric complex with SLC25A37 (PubMed:20427704). Forms a complex with ABCB7 and FECH, where a dimeric FECH bridges ABCB7 and ABCB10 homodimers; this complex may be required for cellular iron homeostasis, mitochondrial function and heme biosynthesis (PubMed:30765471).</text>
</comment>
<comment type="subcellular location">
    <subcellularLocation>
        <location evidence="4">Mitochondrion inner membrane</location>
        <topology evidence="1">Multi-pass membrane protein</topology>
    </subcellularLocation>
</comment>
<comment type="tissue specificity">
    <text evidence="4">Expressed at particularly high levels in fetal liver, and erythroid tissues of embryos and adults. Found also in adult bone marrow, liver and kidney, and at lower levels in heart, brain and spleen.</text>
</comment>
<comment type="developmental stage">
    <text evidence="4">Abundant in the liver but not in non-hematopoietic tissues of 13 dpc embryos.</text>
</comment>
<comment type="induction">
    <text evidence="4 7">By transcription factor GATA-1 during erythroid differentiation and in vitro, by DMSO during terminal erythroid maturation. Induced during cell erythroid differentiation (PubMed:20427704).</text>
</comment>
<comment type="disruption phenotype">
    <text evidence="8 9 13">Homozygous knockout mice for ABCB10 are embryonic lethal and embryos are pale and die between 10.5 and 11.5 dpc because of embryonic hematopoietic failure (PubMed:22240895, PubMed:24421385). Embryos are completely resorbed by the uterus by 13.5 dpc and present severe anemia at 10.5 dpc (PubMed:22240895). Liver-specific knockout mice show normal liver function. However high-fat diet liver-specific knockout mice show protection from insulin resistance, increased mitochondrial respiration, protection from steatosis and hyperglycemia (PubMed:34011630).</text>
</comment>
<comment type="similarity">
    <text evidence="15">Belongs to the ABC transporter superfamily. ABCB family. Mitochondrial peptide exporter (TC 3.A.1.212) subfamily.</text>
</comment>
<keyword id="KW-0007">Acetylation</keyword>
<keyword id="KW-0067">ATP-binding</keyword>
<keyword id="KW-0318">Glutathionylation</keyword>
<keyword id="KW-0460">Magnesium</keyword>
<keyword id="KW-0472">Membrane</keyword>
<keyword id="KW-0479">Metal-binding</keyword>
<keyword id="KW-0496">Mitochondrion</keyword>
<keyword id="KW-0999">Mitochondrion inner membrane</keyword>
<keyword id="KW-0547">Nucleotide-binding</keyword>
<keyword id="KW-1185">Reference proteome</keyword>
<keyword id="KW-0809">Transit peptide</keyword>
<keyword id="KW-1278">Translocase</keyword>
<keyword id="KW-0812">Transmembrane</keyword>
<keyword id="KW-1133">Transmembrane helix</keyword>
<keyword id="KW-0813">Transport</keyword>
<gene>
    <name evidence="16" type="primary">Abcb10</name>
</gene>
<accession>Q9JI39</accession>
<accession>Q542P7</accession>
<accession>Q9D0C7</accession>
<organism>
    <name type="scientific">Mus musculus</name>
    <name type="common">Mouse</name>
    <dbReference type="NCBI Taxonomy" id="10090"/>
    <lineage>
        <taxon>Eukaryota</taxon>
        <taxon>Metazoa</taxon>
        <taxon>Chordata</taxon>
        <taxon>Craniata</taxon>
        <taxon>Vertebrata</taxon>
        <taxon>Euteleostomi</taxon>
        <taxon>Mammalia</taxon>
        <taxon>Eutheria</taxon>
        <taxon>Euarchontoglires</taxon>
        <taxon>Glires</taxon>
        <taxon>Rodentia</taxon>
        <taxon>Myomorpha</taxon>
        <taxon>Muroidea</taxon>
        <taxon>Muridae</taxon>
        <taxon>Murinae</taxon>
        <taxon>Mus</taxon>
        <taxon>Mus</taxon>
    </lineage>
</organism>
<name>ABCBA_MOUSE</name>
<dbReference type="EC" id="7.6.2.-" evidence="1"/>
<dbReference type="EMBL" id="AF266284">
    <property type="protein sequence ID" value="AAF76889.1"/>
    <property type="molecule type" value="mRNA"/>
</dbReference>
<dbReference type="EMBL" id="AK081782">
    <property type="protein sequence ID" value="BAC38331.1"/>
    <property type="molecule type" value="mRNA"/>
</dbReference>
<dbReference type="EMBL" id="BC046818">
    <property type="protein sequence ID" value="AAH46818.1"/>
    <property type="molecule type" value="mRNA"/>
</dbReference>
<dbReference type="EMBL" id="BC053020">
    <property type="protein sequence ID" value="AAH53020.1"/>
    <property type="molecule type" value="mRNA"/>
</dbReference>
<dbReference type="EMBL" id="BC054793">
    <property type="protein sequence ID" value="AAH54793.1"/>
    <property type="molecule type" value="mRNA"/>
</dbReference>
<dbReference type="CCDS" id="CCDS22766.1"/>
<dbReference type="RefSeq" id="NP_062425.1">
    <property type="nucleotide sequence ID" value="NM_019552.2"/>
</dbReference>
<dbReference type="SMR" id="Q9JI39"/>
<dbReference type="BioGRID" id="207837">
    <property type="interactions" value="7"/>
</dbReference>
<dbReference type="FunCoup" id="Q9JI39">
    <property type="interactions" value="2249"/>
</dbReference>
<dbReference type="IntAct" id="Q9JI39">
    <property type="interactions" value="8"/>
</dbReference>
<dbReference type="STRING" id="10090.ENSMUSP00000075011"/>
<dbReference type="iPTMnet" id="Q9JI39"/>
<dbReference type="PhosphoSitePlus" id="Q9JI39"/>
<dbReference type="SwissPalm" id="Q9JI39"/>
<dbReference type="jPOST" id="Q9JI39"/>
<dbReference type="PaxDb" id="10090-ENSMUSP00000075011"/>
<dbReference type="PeptideAtlas" id="Q9JI39"/>
<dbReference type="ProteomicsDB" id="285954"/>
<dbReference type="Pumba" id="Q9JI39"/>
<dbReference type="Antibodypedia" id="34677">
    <property type="antibodies" value="224 antibodies from 30 providers"/>
</dbReference>
<dbReference type="DNASU" id="56199"/>
<dbReference type="Ensembl" id="ENSMUST00000075578.7">
    <property type="protein sequence ID" value="ENSMUSP00000075011.7"/>
    <property type="gene ID" value="ENSMUSG00000031974.9"/>
</dbReference>
<dbReference type="GeneID" id="56199"/>
<dbReference type="KEGG" id="mmu:56199"/>
<dbReference type="UCSC" id="uc009nwv.1">
    <property type="organism name" value="mouse"/>
</dbReference>
<dbReference type="AGR" id="MGI:1860508"/>
<dbReference type="CTD" id="23456"/>
<dbReference type="MGI" id="MGI:1860508">
    <property type="gene designation" value="Abcb10"/>
</dbReference>
<dbReference type="VEuPathDB" id="HostDB:ENSMUSG00000031974"/>
<dbReference type="eggNOG" id="KOG0058">
    <property type="taxonomic scope" value="Eukaryota"/>
</dbReference>
<dbReference type="GeneTree" id="ENSGT00940000157680"/>
<dbReference type="HOGENOM" id="CLU_000604_84_3_1"/>
<dbReference type="InParanoid" id="Q9JI39"/>
<dbReference type="OMA" id="MYTGHTL"/>
<dbReference type="OrthoDB" id="6500128at2759"/>
<dbReference type="PhylomeDB" id="Q9JI39"/>
<dbReference type="TreeFam" id="TF105198"/>
<dbReference type="BioGRID-ORCS" id="56199">
    <property type="hits" value="4 hits in 77 CRISPR screens"/>
</dbReference>
<dbReference type="ChiTaRS" id="Abcb10">
    <property type="organism name" value="mouse"/>
</dbReference>
<dbReference type="PRO" id="PR:Q9JI39"/>
<dbReference type="Proteomes" id="UP000000589">
    <property type="component" value="Chromosome 8"/>
</dbReference>
<dbReference type="RNAct" id="Q9JI39">
    <property type="molecule type" value="protein"/>
</dbReference>
<dbReference type="Bgee" id="ENSMUSG00000031974">
    <property type="expression patterns" value="Expressed in fetal liver hematopoietic progenitor cell and 244 other cell types or tissues"/>
</dbReference>
<dbReference type="GO" id="GO:0005743">
    <property type="term" value="C:mitochondrial inner membrane"/>
    <property type="evidence" value="ECO:0000314"/>
    <property type="project" value="MGI"/>
</dbReference>
<dbReference type="GO" id="GO:0005739">
    <property type="term" value="C:mitochondrion"/>
    <property type="evidence" value="ECO:0000314"/>
    <property type="project" value="MGI"/>
</dbReference>
<dbReference type="GO" id="GO:0140359">
    <property type="term" value="F:ABC-type transporter activity"/>
    <property type="evidence" value="ECO:0000250"/>
    <property type="project" value="UniProtKB"/>
</dbReference>
<dbReference type="GO" id="GO:0005524">
    <property type="term" value="F:ATP binding"/>
    <property type="evidence" value="ECO:0000314"/>
    <property type="project" value="UniProtKB"/>
</dbReference>
<dbReference type="GO" id="GO:0016887">
    <property type="term" value="F:ATP hydrolysis activity"/>
    <property type="evidence" value="ECO:0000314"/>
    <property type="project" value="UniProtKB"/>
</dbReference>
<dbReference type="GO" id="GO:0042802">
    <property type="term" value="F:identical protein binding"/>
    <property type="evidence" value="ECO:0000353"/>
    <property type="project" value="MGI"/>
</dbReference>
<dbReference type="GO" id="GO:0046872">
    <property type="term" value="F:metal ion binding"/>
    <property type="evidence" value="ECO:0007669"/>
    <property type="project" value="UniProtKB-KW"/>
</dbReference>
<dbReference type="GO" id="GO:0042803">
    <property type="term" value="F:protein homodimerization activity"/>
    <property type="evidence" value="ECO:0007669"/>
    <property type="project" value="Ensembl"/>
</dbReference>
<dbReference type="GO" id="GO:0048821">
    <property type="term" value="P:erythrocyte development"/>
    <property type="evidence" value="ECO:0000250"/>
    <property type="project" value="UniProtKB"/>
</dbReference>
<dbReference type="GO" id="GO:0170037">
    <property type="term" value="P:export from the mitochondrion"/>
    <property type="evidence" value="ECO:0000250"/>
    <property type="project" value="UniProtKB"/>
</dbReference>
<dbReference type="GO" id="GO:0006783">
    <property type="term" value="P:heme biosynthetic process"/>
    <property type="evidence" value="ECO:0000315"/>
    <property type="project" value="UniProtKB"/>
</dbReference>
<dbReference type="GO" id="GO:0034514">
    <property type="term" value="P:mitochondrial unfolded protein response"/>
    <property type="evidence" value="ECO:0000250"/>
    <property type="project" value="UniProtKB"/>
</dbReference>
<dbReference type="GO" id="GO:0045648">
    <property type="term" value="P:positive regulation of erythrocyte differentiation"/>
    <property type="evidence" value="ECO:0000315"/>
    <property type="project" value="UniProtKB"/>
</dbReference>
<dbReference type="GO" id="GO:0070455">
    <property type="term" value="P:positive regulation of heme biosynthetic process"/>
    <property type="evidence" value="ECO:0000250"/>
    <property type="project" value="UniProtKB"/>
</dbReference>
<dbReference type="GO" id="GO:0046985">
    <property type="term" value="P:positive regulation of hemoglobin biosynthetic process"/>
    <property type="evidence" value="ECO:0000250"/>
    <property type="project" value="UniProtKB"/>
</dbReference>
<dbReference type="CDD" id="cd18573">
    <property type="entry name" value="ABC_6TM_ABCB10_like"/>
    <property type="match status" value="1"/>
</dbReference>
<dbReference type="CDD" id="cd03249">
    <property type="entry name" value="ABC_MTABC3_MDL1_MDL2"/>
    <property type="match status" value="1"/>
</dbReference>
<dbReference type="FunFam" id="1.20.1560.10:FF:000048">
    <property type="entry name" value="ATP-binding cassette sub-family B member 10, mitochondrial"/>
    <property type="match status" value="1"/>
</dbReference>
<dbReference type="FunFam" id="3.40.50.300:FF:000403">
    <property type="entry name" value="ATP-binding cassette sub-family B member 8, mitochondrial"/>
    <property type="match status" value="1"/>
</dbReference>
<dbReference type="Gene3D" id="1.20.1560.10">
    <property type="entry name" value="ABC transporter type 1, transmembrane domain"/>
    <property type="match status" value="1"/>
</dbReference>
<dbReference type="Gene3D" id="3.40.50.300">
    <property type="entry name" value="P-loop containing nucleotide triphosphate hydrolases"/>
    <property type="match status" value="1"/>
</dbReference>
<dbReference type="InterPro" id="IPR003593">
    <property type="entry name" value="AAA+_ATPase"/>
</dbReference>
<dbReference type="InterPro" id="IPR011527">
    <property type="entry name" value="ABC1_TM_dom"/>
</dbReference>
<dbReference type="InterPro" id="IPR036640">
    <property type="entry name" value="ABC1_TM_sf"/>
</dbReference>
<dbReference type="InterPro" id="IPR003439">
    <property type="entry name" value="ABC_transporter-like_ATP-bd"/>
</dbReference>
<dbReference type="InterPro" id="IPR017871">
    <property type="entry name" value="ABC_transporter-like_CS"/>
</dbReference>
<dbReference type="InterPro" id="IPR027417">
    <property type="entry name" value="P-loop_NTPase"/>
</dbReference>
<dbReference type="InterPro" id="IPR039421">
    <property type="entry name" value="Type_1_exporter"/>
</dbReference>
<dbReference type="PANTHER" id="PTHR43394:SF1">
    <property type="entry name" value="ATP-BINDING CASSETTE SUB-FAMILY B MEMBER 10, MITOCHONDRIAL"/>
    <property type="match status" value="1"/>
</dbReference>
<dbReference type="PANTHER" id="PTHR43394">
    <property type="entry name" value="ATP-DEPENDENT PERMEASE MDL1, MITOCHONDRIAL"/>
    <property type="match status" value="1"/>
</dbReference>
<dbReference type="Pfam" id="PF00664">
    <property type="entry name" value="ABC_membrane"/>
    <property type="match status" value="1"/>
</dbReference>
<dbReference type="Pfam" id="PF00005">
    <property type="entry name" value="ABC_tran"/>
    <property type="match status" value="1"/>
</dbReference>
<dbReference type="PIRSF" id="PIRSF002773">
    <property type="entry name" value="ABC_prm/ATPase_B"/>
    <property type="match status" value="1"/>
</dbReference>
<dbReference type="SMART" id="SM00382">
    <property type="entry name" value="AAA"/>
    <property type="match status" value="1"/>
</dbReference>
<dbReference type="SUPFAM" id="SSF90123">
    <property type="entry name" value="ABC transporter transmembrane region"/>
    <property type="match status" value="1"/>
</dbReference>
<dbReference type="SUPFAM" id="SSF52540">
    <property type="entry name" value="P-loop containing nucleoside triphosphate hydrolases"/>
    <property type="match status" value="1"/>
</dbReference>
<dbReference type="PROSITE" id="PS50929">
    <property type="entry name" value="ABC_TM1F"/>
    <property type="match status" value="1"/>
</dbReference>
<dbReference type="PROSITE" id="PS00211">
    <property type="entry name" value="ABC_TRANSPORTER_1"/>
    <property type="match status" value="1"/>
</dbReference>
<dbReference type="PROSITE" id="PS50893">
    <property type="entry name" value="ABC_TRANSPORTER_2"/>
    <property type="match status" value="1"/>
</dbReference>
<reference key="1">
    <citation type="journal article" date="2000" name="EMBO J.">
        <title>ABC-me: a novel mitochondrial transporter induced by GATA-1 during erythroid differentiation.</title>
        <authorList>
            <person name="Shirihai O.S."/>
            <person name="Gregory T."/>
            <person name="Yu C."/>
            <person name="Orkin S.H."/>
            <person name="Weiss M.J."/>
        </authorList>
    </citation>
    <scope>NUCLEOTIDE SEQUENCE [MRNA]</scope>
    <scope>SUBCELLULAR LOCATION</scope>
    <scope>TISSUE SPECIFICITY</scope>
    <scope>DEVELOPMENTAL STAGE</scope>
    <scope>INDUCTION</scope>
    <source>
        <tissue>Erythroleukemia</tissue>
    </source>
</reference>
<reference key="2">
    <citation type="journal article" date="2005" name="Science">
        <title>The transcriptional landscape of the mammalian genome.</title>
        <authorList>
            <person name="Carninci P."/>
            <person name="Kasukawa T."/>
            <person name="Katayama S."/>
            <person name="Gough J."/>
            <person name="Frith M.C."/>
            <person name="Maeda N."/>
            <person name="Oyama R."/>
            <person name="Ravasi T."/>
            <person name="Lenhard B."/>
            <person name="Wells C."/>
            <person name="Kodzius R."/>
            <person name="Shimokawa K."/>
            <person name="Bajic V.B."/>
            <person name="Brenner S.E."/>
            <person name="Batalov S."/>
            <person name="Forrest A.R."/>
            <person name="Zavolan M."/>
            <person name="Davis M.J."/>
            <person name="Wilming L.G."/>
            <person name="Aidinis V."/>
            <person name="Allen J.E."/>
            <person name="Ambesi-Impiombato A."/>
            <person name="Apweiler R."/>
            <person name="Aturaliya R.N."/>
            <person name="Bailey T.L."/>
            <person name="Bansal M."/>
            <person name="Baxter L."/>
            <person name="Beisel K.W."/>
            <person name="Bersano T."/>
            <person name="Bono H."/>
            <person name="Chalk A.M."/>
            <person name="Chiu K.P."/>
            <person name="Choudhary V."/>
            <person name="Christoffels A."/>
            <person name="Clutterbuck D.R."/>
            <person name="Crowe M.L."/>
            <person name="Dalla E."/>
            <person name="Dalrymple B.P."/>
            <person name="de Bono B."/>
            <person name="Della Gatta G."/>
            <person name="di Bernardo D."/>
            <person name="Down T."/>
            <person name="Engstrom P."/>
            <person name="Fagiolini M."/>
            <person name="Faulkner G."/>
            <person name="Fletcher C.F."/>
            <person name="Fukushima T."/>
            <person name="Furuno M."/>
            <person name="Futaki S."/>
            <person name="Gariboldi M."/>
            <person name="Georgii-Hemming P."/>
            <person name="Gingeras T.R."/>
            <person name="Gojobori T."/>
            <person name="Green R.E."/>
            <person name="Gustincich S."/>
            <person name="Harbers M."/>
            <person name="Hayashi Y."/>
            <person name="Hensch T.K."/>
            <person name="Hirokawa N."/>
            <person name="Hill D."/>
            <person name="Huminiecki L."/>
            <person name="Iacono M."/>
            <person name="Ikeo K."/>
            <person name="Iwama A."/>
            <person name="Ishikawa T."/>
            <person name="Jakt M."/>
            <person name="Kanapin A."/>
            <person name="Katoh M."/>
            <person name="Kawasawa Y."/>
            <person name="Kelso J."/>
            <person name="Kitamura H."/>
            <person name="Kitano H."/>
            <person name="Kollias G."/>
            <person name="Krishnan S.P."/>
            <person name="Kruger A."/>
            <person name="Kummerfeld S.K."/>
            <person name="Kurochkin I.V."/>
            <person name="Lareau L.F."/>
            <person name="Lazarevic D."/>
            <person name="Lipovich L."/>
            <person name="Liu J."/>
            <person name="Liuni S."/>
            <person name="McWilliam S."/>
            <person name="Madan Babu M."/>
            <person name="Madera M."/>
            <person name="Marchionni L."/>
            <person name="Matsuda H."/>
            <person name="Matsuzawa S."/>
            <person name="Miki H."/>
            <person name="Mignone F."/>
            <person name="Miyake S."/>
            <person name="Morris K."/>
            <person name="Mottagui-Tabar S."/>
            <person name="Mulder N."/>
            <person name="Nakano N."/>
            <person name="Nakauchi H."/>
            <person name="Ng P."/>
            <person name="Nilsson R."/>
            <person name="Nishiguchi S."/>
            <person name="Nishikawa S."/>
            <person name="Nori F."/>
            <person name="Ohara O."/>
            <person name="Okazaki Y."/>
            <person name="Orlando V."/>
            <person name="Pang K.C."/>
            <person name="Pavan W.J."/>
            <person name="Pavesi G."/>
            <person name="Pesole G."/>
            <person name="Petrovsky N."/>
            <person name="Piazza S."/>
            <person name="Reed J."/>
            <person name="Reid J.F."/>
            <person name="Ring B.Z."/>
            <person name="Ringwald M."/>
            <person name="Rost B."/>
            <person name="Ruan Y."/>
            <person name="Salzberg S.L."/>
            <person name="Sandelin A."/>
            <person name="Schneider C."/>
            <person name="Schoenbach C."/>
            <person name="Sekiguchi K."/>
            <person name="Semple C.A."/>
            <person name="Seno S."/>
            <person name="Sessa L."/>
            <person name="Sheng Y."/>
            <person name="Shibata Y."/>
            <person name="Shimada H."/>
            <person name="Shimada K."/>
            <person name="Silva D."/>
            <person name="Sinclair B."/>
            <person name="Sperling S."/>
            <person name="Stupka E."/>
            <person name="Sugiura K."/>
            <person name="Sultana R."/>
            <person name="Takenaka Y."/>
            <person name="Taki K."/>
            <person name="Tammoja K."/>
            <person name="Tan S.L."/>
            <person name="Tang S."/>
            <person name="Taylor M.S."/>
            <person name="Tegner J."/>
            <person name="Teichmann S.A."/>
            <person name="Ueda H.R."/>
            <person name="van Nimwegen E."/>
            <person name="Verardo R."/>
            <person name="Wei C.L."/>
            <person name="Yagi K."/>
            <person name="Yamanishi H."/>
            <person name="Zabarovsky E."/>
            <person name="Zhu S."/>
            <person name="Zimmer A."/>
            <person name="Hide W."/>
            <person name="Bult C."/>
            <person name="Grimmond S.M."/>
            <person name="Teasdale R.D."/>
            <person name="Liu E.T."/>
            <person name="Brusic V."/>
            <person name="Quackenbush J."/>
            <person name="Wahlestedt C."/>
            <person name="Mattick J.S."/>
            <person name="Hume D.A."/>
            <person name="Kai C."/>
            <person name="Sasaki D."/>
            <person name="Tomaru Y."/>
            <person name="Fukuda S."/>
            <person name="Kanamori-Katayama M."/>
            <person name="Suzuki M."/>
            <person name="Aoki J."/>
            <person name="Arakawa T."/>
            <person name="Iida J."/>
            <person name="Imamura K."/>
            <person name="Itoh M."/>
            <person name="Kato T."/>
            <person name="Kawaji H."/>
            <person name="Kawagashira N."/>
            <person name="Kawashima T."/>
            <person name="Kojima M."/>
            <person name="Kondo S."/>
            <person name="Konno H."/>
            <person name="Nakano K."/>
            <person name="Ninomiya N."/>
            <person name="Nishio T."/>
            <person name="Okada M."/>
            <person name="Plessy C."/>
            <person name="Shibata K."/>
            <person name="Shiraki T."/>
            <person name="Suzuki S."/>
            <person name="Tagami M."/>
            <person name="Waki K."/>
            <person name="Watahiki A."/>
            <person name="Okamura-Oho Y."/>
            <person name="Suzuki H."/>
            <person name="Kawai J."/>
            <person name="Hayashizaki Y."/>
        </authorList>
    </citation>
    <scope>NUCLEOTIDE SEQUENCE [LARGE SCALE MRNA]</scope>
    <source>
        <strain>C57BL/6J</strain>
        <tissue>Embryo</tissue>
        <tissue>Head</tissue>
    </source>
</reference>
<reference key="3">
    <citation type="journal article" date="2004" name="Genome Res.">
        <title>The status, quality, and expansion of the NIH full-length cDNA project: the Mammalian Gene Collection (MGC).</title>
        <authorList>
            <consortium name="The MGC Project Team"/>
        </authorList>
    </citation>
    <scope>NUCLEOTIDE SEQUENCE [LARGE SCALE MRNA]</scope>
    <source>
        <strain>C57BL/6J</strain>
        <tissue>Brain</tissue>
        <tissue>Retina</tissue>
    </source>
</reference>
<reference key="4">
    <citation type="journal article" date="2004" name="J. Biol. Chem.">
        <title>Targeting, import, and dimerization of a mammalian mitochondrial ATP binding cassette (ABC) transporter, ABCB10 (ABC-me).</title>
        <authorList>
            <person name="Graf S.A."/>
            <person name="Haigh S.E."/>
            <person name="Corson E.D."/>
            <person name="Shirihai O.S."/>
        </authorList>
    </citation>
    <scope>TRANSIT PEPTIDE CLEAVAGE SITE</scope>
    <scope>SUBUNIT</scope>
</reference>
<reference key="5">
    <citation type="journal article" date="2009" name="Proc. Natl. Acad. Sci. U.S.A.">
        <title>Abcb10 physically interacts with mitoferrin-1 (Slc25a37) to enhance its stability and function in the erythroid mitochondria.</title>
        <authorList>
            <person name="Chen W."/>
            <person name="Paradkar P.N."/>
            <person name="Li L."/>
            <person name="Pierce E.L."/>
            <person name="Langer N.B."/>
            <person name="Takahashi-Makise N."/>
            <person name="Hyde B.B."/>
            <person name="Shirihai O.S."/>
            <person name="Ward D.M."/>
            <person name="Kaplan J."/>
            <person name="Paw B.H."/>
        </authorList>
    </citation>
    <scope>FUNCTION</scope>
    <scope>INTERACTION WITH SLC25A37</scope>
    <scope>INDUCTION</scope>
</reference>
<reference key="6">
    <citation type="journal article" date="2010" name="Blood">
        <title>Ferrochelatase forms an oligomeric complex with mitoferrin-1 and Abcb10 for erythroid heme biosynthesis.</title>
        <authorList>
            <person name="Chen W."/>
            <person name="Dailey H.A."/>
            <person name="Paw B.H."/>
        </authorList>
    </citation>
    <scope>INTERACTION WITH FECH</scope>
    <scope>INDUCTION</scope>
</reference>
<reference key="7">
    <citation type="journal article" date="2010" name="Cell">
        <title>A tissue-specific atlas of mouse protein phosphorylation and expression.</title>
        <authorList>
            <person name="Huttlin E.L."/>
            <person name="Jedrychowski M.P."/>
            <person name="Elias J.E."/>
            <person name="Goswami T."/>
            <person name="Rad R."/>
            <person name="Beausoleil S.A."/>
            <person name="Villen J."/>
            <person name="Haas W."/>
            <person name="Sowa M.E."/>
            <person name="Gygi S.P."/>
        </authorList>
    </citation>
    <scope>IDENTIFICATION BY MASS SPECTROMETRY [LARGE SCALE ANALYSIS]</scope>
    <source>
        <tissue>Brain</tissue>
        <tissue>Brown adipose tissue</tissue>
        <tissue>Heart</tissue>
        <tissue>Lung</tissue>
        <tissue>Spleen</tissue>
        <tissue>Testis</tissue>
    </source>
</reference>
<reference key="8">
    <citation type="journal article" date="2012" name="Cell Death Differ.">
        <title>The mitochondrial transporter ABC-me (ABCB10), a downstream target of GATA-1, is essential for erythropoiesis in vivo.</title>
        <authorList>
            <person name="Hyde B.B."/>
            <person name="Liesa M."/>
            <person name="Elorza A.A."/>
            <person name="Qiu W."/>
            <person name="Haigh S.E."/>
            <person name="Richey L."/>
            <person name="Mikkola H.K."/>
            <person name="Schlaeger T.M."/>
            <person name="Shirihai O.S."/>
        </authorList>
    </citation>
    <scope>DISRUPTION PHENOTYPE</scope>
    <scope>FUNCTION</scope>
</reference>
<reference key="9">
    <citation type="journal article" date="2014" name="Mol. Cell. Biol.">
        <title>Abcb10 role in heme biosynthesis in vivo: Abcb10 knockout in mice causes anemia with protoporphyrin IX and iron accumulation.</title>
        <authorList>
            <person name="Yamamoto M."/>
            <person name="Arimura H."/>
            <person name="Fukushige T."/>
            <person name="Minami K."/>
            <person name="Nishizawa Y."/>
            <person name="Tanimoto A."/>
            <person name="Kanekura T."/>
            <person name="Nakagawa M."/>
            <person name="Akiyama S."/>
            <person name="Furukawa T."/>
        </authorList>
    </citation>
    <scope>DISRUPTION PHENOTYPE</scope>
    <scope>FUNCTION</scope>
</reference>
<reference key="10">
    <citation type="journal article" date="2015" name="PLoS ONE">
        <title>ATP Binding and Hydrolysis Properties of ABCB10 and Their Regulation by Glutathione.</title>
        <authorList>
            <person name="Qiu W."/>
            <person name="Liesa M."/>
            <person name="Carpenter E.P."/>
            <person name="Shirihai O.S."/>
        </authorList>
    </citation>
    <scope>ACTIVITY REGULATION</scope>
    <scope>MUTAGENESIS OF GLY-497; LYS-498; CYS-547; GLY-602; GLU-624 AND CYS-675</scope>
    <scope>GLUTATHIONYLATION AT CYS-547</scope>
    <scope>FUNCTION</scope>
</reference>
<reference key="11">
    <citation type="journal article" date="2017" name="J. Biol. Chem.">
        <title>Reductions in the mitochondrial ABC transporter Abcb10 affect the transcriptional profile of heme biosynthesis genes.</title>
        <authorList>
            <person name="Seguin A."/>
            <person name="Takahashi-Makise N."/>
            <person name="Yien Y.Y."/>
            <person name="Huston N.C."/>
            <person name="Whitman J.C."/>
            <person name="Musso G."/>
            <person name="Wallace J.A."/>
            <person name="Bradley T."/>
            <person name="Bergonia H.A."/>
            <person name="Kafina M.D."/>
            <person name="Matsumoto M."/>
            <person name="Igarashi K."/>
            <person name="Phillips J.D."/>
            <person name="Paw B.H."/>
            <person name="Kaplan J."/>
            <person name="Ward D.M."/>
        </authorList>
    </citation>
    <scope>FUNCTION</scope>
</reference>
<reference key="12">
    <citation type="journal article" date="2019" name="Haematologica">
        <title>Dimeric ferrochelatase bridges ABCB7 and ABCB10 homodimers in an architecturally defined molecular complex required for heme biosynthesis.</title>
        <authorList>
            <person name="Maio N."/>
            <person name="Kim K.S."/>
            <person name="Holmes-Hampton G."/>
            <person name="Singh A."/>
            <person name="Rouault T.A."/>
        </authorList>
    </citation>
    <scope>SUBUNIT</scope>
</reference>
<reference key="13">
    <citation type="journal article" date="2021" name="Sci. Transl. Med.">
        <title>ABCB10 exports mitochondrial biliverdin, driving metabolic maladaptation in obesity.</title>
        <authorList>
            <person name="Shum M."/>
            <person name="Shintre C.A."/>
            <person name="Althoff T."/>
            <person name="Gutierrez V."/>
            <person name="Segawa M."/>
            <person name="Saxberg A.D."/>
            <person name="Martinez M."/>
            <person name="Adamson R."/>
            <person name="Young M.R."/>
            <person name="Faust B."/>
            <person name="Gharakhanian R."/>
            <person name="Su S."/>
            <person name="Chella Krishnan K."/>
            <person name="Mahdaviani K."/>
            <person name="Veliova M."/>
            <person name="Wolf D.M."/>
            <person name="Ngo J."/>
            <person name="Nocito L."/>
            <person name="Stiles L."/>
            <person name="Abramson J."/>
            <person name="Lusis A.J."/>
            <person name="Hevener A.L."/>
            <person name="Zoghbi M.E."/>
            <person name="Carpenter E.P."/>
            <person name="Liesa M."/>
        </authorList>
    </citation>
    <scope>FUNCTION</scope>
    <scope>DISRUPTION PHENOTYPE</scope>
</reference>
<evidence type="ECO:0000250" key="1">
    <source>
        <dbReference type="UniProtKB" id="Q9NRK6"/>
    </source>
</evidence>
<evidence type="ECO:0000255" key="2">
    <source>
        <dbReference type="PROSITE-ProRule" id="PRU00434"/>
    </source>
</evidence>
<evidence type="ECO:0000255" key="3">
    <source>
        <dbReference type="PROSITE-ProRule" id="PRU00441"/>
    </source>
</evidence>
<evidence type="ECO:0000269" key="4">
    <source>
    </source>
</evidence>
<evidence type="ECO:0000269" key="5">
    <source>
    </source>
</evidence>
<evidence type="ECO:0000269" key="6">
    <source>
    </source>
</evidence>
<evidence type="ECO:0000269" key="7">
    <source>
    </source>
</evidence>
<evidence type="ECO:0000269" key="8">
    <source>
    </source>
</evidence>
<evidence type="ECO:0000269" key="9">
    <source>
    </source>
</evidence>
<evidence type="ECO:0000269" key="10">
    <source>
    </source>
</evidence>
<evidence type="ECO:0000269" key="11">
    <source>
    </source>
</evidence>
<evidence type="ECO:0000269" key="12">
    <source>
    </source>
</evidence>
<evidence type="ECO:0000269" key="13">
    <source>
    </source>
</evidence>
<evidence type="ECO:0000303" key="14">
    <source>
    </source>
</evidence>
<evidence type="ECO:0000305" key="15"/>
<evidence type="ECO:0000312" key="16">
    <source>
        <dbReference type="MGI" id="MGI:1860508"/>
    </source>
</evidence>
<protein>
    <recommendedName>
        <fullName evidence="15">ATP-binding cassette sub-family B member 10, mitochondrial</fullName>
    </recommendedName>
    <alternativeName>
        <fullName evidence="14">ABC-mitochondrial erythroid protein</fullName>
        <shortName evidence="14">ABC-me protein</shortName>
    </alternativeName>
    <alternativeName>
        <fullName>ATP-binding cassette transporter 10</fullName>
        <shortName>ABC transporter 10 protein</shortName>
        <ecNumber evidence="1">7.6.2.-</ecNumber>
    </alternativeName>
</protein>